<keyword id="KW-0028">Amino-acid biosynthesis</keyword>
<keyword id="KW-0057">Aromatic amino acid biosynthesis</keyword>
<keyword id="KW-0210">Decarboxylase</keyword>
<keyword id="KW-0456">Lyase</keyword>
<keyword id="KW-0822">Tryptophan biosynthesis</keyword>
<reference key="1">
    <citation type="journal article" date="2009" name="PLoS ONE">
        <title>Genome degradation in Brucella ovis corresponds with narrowing of its host range and tissue tropism.</title>
        <authorList>
            <person name="Tsolis R.M."/>
            <person name="Seshadri R."/>
            <person name="Santos R.L."/>
            <person name="Sangari F.J."/>
            <person name="Lobo J.M."/>
            <person name="de Jong M.F."/>
            <person name="Ren Q."/>
            <person name="Myers G."/>
            <person name="Brinkac L.M."/>
            <person name="Nelson W.C."/>
            <person name="Deboy R.T."/>
            <person name="Angiuoli S."/>
            <person name="Khouri H."/>
            <person name="Dimitrov G."/>
            <person name="Robinson J.R."/>
            <person name="Mulligan S."/>
            <person name="Walker R.L."/>
            <person name="Elzer P.E."/>
            <person name="Hassan K.A."/>
            <person name="Paulsen I.T."/>
        </authorList>
    </citation>
    <scope>NUCLEOTIDE SEQUENCE [LARGE SCALE GENOMIC DNA]</scope>
    <source>
        <strain>ATCC 25840 / 63/290 / NCTC 10512</strain>
    </source>
</reference>
<feature type="chain" id="PRO_1000018450" description="Indole-3-glycerol phosphate synthase">
    <location>
        <begin position="1"/>
        <end position="268"/>
    </location>
</feature>
<dbReference type="EC" id="4.1.1.48" evidence="1"/>
<dbReference type="EMBL" id="CP000708">
    <property type="protein sequence ID" value="ABQ60341.1"/>
    <property type="molecule type" value="Genomic_DNA"/>
</dbReference>
<dbReference type="RefSeq" id="WP_006012661.1">
    <property type="nucleotide sequence ID" value="NC_009505.1"/>
</dbReference>
<dbReference type="SMR" id="A5VQR5"/>
<dbReference type="GeneID" id="45124517"/>
<dbReference type="KEGG" id="bov:BOV_1100"/>
<dbReference type="HOGENOM" id="CLU_034247_2_0_5"/>
<dbReference type="PhylomeDB" id="A5VQR5"/>
<dbReference type="UniPathway" id="UPA00035">
    <property type="reaction ID" value="UER00043"/>
</dbReference>
<dbReference type="Proteomes" id="UP000006383">
    <property type="component" value="Chromosome I"/>
</dbReference>
<dbReference type="GO" id="GO:0004425">
    <property type="term" value="F:indole-3-glycerol-phosphate synthase activity"/>
    <property type="evidence" value="ECO:0007669"/>
    <property type="project" value="UniProtKB-UniRule"/>
</dbReference>
<dbReference type="GO" id="GO:0004640">
    <property type="term" value="F:phosphoribosylanthranilate isomerase activity"/>
    <property type="evidence" value="ECO:0007669"/>
    <property type="project" value="TreeGrafter"/>
</dbReference>
<dbReference type="GO" id="GO:0000162">
    <property type="term" value="P:L-tryptophan biosynthetic process"/>
    <property type="evidence" value="ECO:0007669"/>
    <property type="project" value="UniProtKB-UniRule"/>
</dbReference>
<dbReference type="CDD" id="cd00331">
    <property type="entry name" value="IGPS"/>
    <property type="match status" value="1"/>
</dbReference>
<dbReference type="FunFam" id="3.20.20.70:FF:000024">
    <property type="entry name" value="Indole-3-glycerol phosphate synthase"/>
    <property type="match status" value="1"/>
</dbReference>
<dbReference type="Gene3D" id="3.20.20.70">
    <property type="entry name" value="Aldolase class I"/>
    <property type="match status" value="1"/>
</dbReference>
<dbReference type="HAMAP" id="MF_00134_B">
    <property type="entry name" value="IGPS_B"/>
    <property type="match status" value="1"/>
</dbReference>
<dbReference type="InterPro" id="IPR013785">
    <property type="entry name" value="Aldolase_TIM"/>
</dbReference>
<dbReference type="InterPro" id="IPR045186">
    <property type="entry name" value="Indole-3-glycerol_P_synth"/>
</dbReference>
<dbReference type="InterPro" id="IPR013798">
    <property type="entry name" value="Indole-3-glycerol_P_synth_dom"/>
</dbReference>
<dbReference type="InterPro" id="IPR001468">
    <property type="entry name" value="Indole-3-GlycerolPSynthase_CS"/>
</dbReference>
<dbReference type="InterPro" id="IPR011060">
    <property type="entry name" value="RibuloseP-bd_barrel"/>
</dbReference>
<dbReference type="NCBIfam" id="NF001370">
    <property type="entry name" value="PRK00278.1-2"/>
    <property type="match status" value="1"/>
</dbReference>
<dbReference type="NCBIfam" id="NF001373">
    <property type="entry name" value="PRK00278.1-6"/>
    <property type="match status" value="1"/>
</dbReference>
<dbReference type="NCBIfam" id="NF001377">
    <property type="entry name" value="PRK00278.2-4"/>
    <property type="match status" value="1"/>
</dbReference>
<dbReference type="PANTHER" id="PTHR22854:SF2">
    <property type="entry name" value="INDOLE-3-GLYCEROL-PHOSPHATE SYNTHASE"/>
    <property type="match status" value="1"/>
</dbReference>
<dbReference type="PANTHER" id="PTHR22854">
    <property type="entry name" value="TRYPTOPHAN BIOSYNTHESIS PROTEIN"/>
    <property type="match status" value="1"/>
</dbReference>
<dbReference type="Pfam" id="PF00218">
    <property type="entry name" value="IGPS"/>
    <property type="match status" value="1"/>
</dbReference>
<dbReference type="SUPFAM" id="SSF51366">
    <property type="entry name" value="Ribulose-phoshate binding barrel"/>
    <property type="match status" value="1"/>
</dbReference>
<dbReference type="PROSITE" id="PS00614">
    <property type="entry name" value="IGPS"/>
    <property type="match status" value="1"/>
</dbReference>
<evidence type="ECO:0000255" key="1">
    <source>
        <dbReference type="HAMAP-Rule" id="MF_00134"/>
    </source>
</evidence>
<name>TRPC_BRUO2</name>
<comment type="catalytic activity">
    <reaction evidence="1">
        <text>1-(2-carboxyphenylamino)-1-deoxy-D-ribulose 5-phosphate + H(+) = (1S,2R)-1-C-(indol-3-yl)glycerol 3-phosphate + CO2 + H2O</text>
        <dbReference type="Rhea" id="RHEA:23476"/>
        <dbReference type="ChEBI" id="CHEBI:15377"/>
        <dbReference type="ChEBI" id="CHEBI:15378"/>
        <dbReference type="ChEBI" id="CHEBI:16526"/>
        <dbReference type="ChEBI" id="CHEBI:58613"/>
        <dbReference type="ChEBI" id="CHEBI:58866"/>
        <dbReference type="EC" id="4.1.1.48"/>
    </reaction>
</comment>
<comment type="pathway">
    <text evidence="1">Amino-acid biosynthesis; L-tryptophan biosynthesis; L-tryptophan from chorismate: step 4/5.</text>
</comment>
<comment type="similarity">
    <text evidence="1">Belongs to the TrpC family.</text>
</comment>
<accession>A5VQR5</accession>
<proteinExistence type="inferred from homology"/>
<organism>
    <name type="scientific">Brucella ovis (strain ATCC 25840 / 63/290 / NCTC 10512)</name>
    <dbReference type="NCBI Taxonomy" id="444178"/>
    <lineage>
        <taxon>Bacteria</taxon>
        <taxon>Pseudomonadati</taxon>
        <taxon>Pseudomonadota</taxon>
        <taxon>Alphaproteobacteria</taxon>
        <taxon>Hyphomicrobiales</taxon>
        <taxon>Brucellaceae</taxon>
        <taxon>Brucella/Ochrobactrum group</taxon>
        <taxon>Brucella</taxon>
    </lineage>
</organism>
<protein>
    <recommendedName>
        <fullName evidence="1">Indole-3-glycerol phosphate synthase</fullName>
        <shortName evidence="1">IGPS</shortName>
        <ecNumber evidence="1">4.1.1.48</ecNumber>
    </recommendedName>
</protein>
<gene>
    <name evidence="1" type="primary">trpC</name>
    <name type="ordered locus">BOV_1100</name>
</gene>
<sequence>MSTDILRKIEAYKREEIAAAKARLALDELKARTRDQSAPHGFLKALEAKRAAGQFALIAEIKKASPSKGLIRPDFDPPALAKAYEEGGAACLSVLTDTPSFQGAPEFLTAARQACSLPALRKDFLFDPYQVYEARSWGADCILIIMASVDDDLAKELEDTAFALGMDALIEVHDEAEMERALKLSSRLLGVNNRNLRSFEVNLAVSERLAKMAPSDRLLVGESGIFTHEDCLRLEKSGIGTFLIGESLMRQHDVAAATRALLTGAEKL</sequence>